<reference key="1">
    <citation type="journal article" date="1997" name="Virology">
        <title>The sequence of the Orgyia pseudotsugata multinucleocapsid nuclear polyhedrosis virus genome.</title>
        <authorList>
            <person name="Ahrens C.H."/>
            <person name="Russell R.R."/>
            <person name="Funk C.J."/>
            <person name="Evans J."/>
            <person name="Harwood S."/>
            <person name="Rohrmann G.F."/>
        </authorList>
    </citation>
    <scope>NUCLEOTIDE SEQUENCE [LARGE SCALE GENOMIC DNA]</scope>
</reference>
<accession>O10360</accession>
<gene>
    <name type="ORF">ORF121</name>
</gene>
<protein>
    <recommendedName>
        <fullName>Uncharacterized 7.6 kDa protein</fullName>
    </recommendedName>
</protein>
<dbReference type="EMBL" id="U75930">
    <property type="protein sequence ID" value="AAC59120.1"/>
    <property type="molecule type" value="Genomic_DNA"/>
</dbReference>
<dbReference type="RefSeq" id="NP_046277.1">
    <property type="nucleotide sequence ID" value="NC_001875.2"/>
</dbReference>
<dbReference type="KEGG" id="vg:912088"/>
<dbReference type="OrthoDB" id="29019at10239"/>
<dbReference type="Proteomes" id="UP000009248">
    <property type="component" value="Genome"/>
</dbReference>
<dbReference type="InterPro" id="IPR035259">
    <property type="entry name" value="DUF5437"/>
</dbReference>
<dbReference type="Pfam" id="PF17505">
    <property type="entry name" value="DUF5437"/>
    <property type="match status" value="1"/>
</dbReference>
<name>Y122_NPVOP</name>
<keyword id="KW-1185">Reference proteome</keyword>
<keyword id="KW-0732">Signal</keyword>
<proteinExistence type="inferred from homology"/>
<organismHost>
    <name type="scientific">Orgyia pseudotsugata</name>
    <name type="common">Douglas-fir tussock moth</name>
    <dbReference type="NCBI Taxonomy" id="33414"/>
</organismHost>
<organism>
    <name type="scientific">Orgyia pseudotsugata multicapsid polyhedrosis virus</name>
    <name type="common">OpMNPV</name>
    <dbReference type="NCBI Taxonomy" id="262177"/>
    <lineage>
        <taxon>Viruses</taxon>
        <taxon>Viruses incertae sedis</taxon>
        <taxon>Naldaviricetes</taxon>
        <taxon>Lefavirales</taxon>
        <taxon>Baculoviridae</taxon>
        <taxon>Alphabaculovirus</taxon>
        <taxon>Alphabaculovirus orpseudotsugatae</taxon>
    </lineage>
</organism>
<sequence>MKLLLVLITLIIAALANNALRDPLAPPVRRFGHLAGAPKLRGHDASRNVAAQPVYNAAEERLQQCRAHLD</sequence>
<feature type="signal peptide" evidence="1">
    <location>
        <begin position="1"/>
        <end position="16"/>
    </location>
</feature>
<feature type="chain" id="PRO_0000036758" description="Uncharacterized 7.6 kDa protein">
    <location>
        <begin position="17"/>
        <end position="70"/>
    </location>
</feature>
<evidence type="ECO:0000255" key="1"/>